<dbReference type="EMBL" id="AM233362">
    <property type="protein sequence ID" value="CAJ79178.1"/>
    <property type="molecule type" value="Genomic_DNA"/>
</dbReference>
<dbReference type="RefSeq" id="WP_003015250.1">
    <property type="nucleotide sequence ID" value="NZ_CP009694.1"/>
</dbReference>
<dbReference type="SMR" id="Q2A464"/>
<dbReference type="KEGG" id="ftl:FTL_0739"/>
<dbReference type="Proteomes" id="UP000001944">
    <property type="component" value="Chromosome"/>
</dbReference>
<dbReference type="GO" id="GO:0005829">
    <property type="term" value="C:cytosol"/>
    <property type="evidence" value="ECO:0007669"/>
    <property type="project" value="TreeGrafter"/>
</dbReference>
<dbReference type="GO" id="GO:0050660">
    <property type="term" value="F:flavin adenine dinucleotide binding"/>
    <property type="evidence" value="ECO:0007669"/>
    <property type="project" value="UniProtKB-UniRule"/>
</dbReference>
<dbReference type="GO" id="GO:0030488">
    <property type="term" value="P:tRNA methylation"/>
    <property type="evidence" value="ECO:0007669"/>
    <property type="project" value="TreeGrafter"/>
</dbReference>
<dbReference type="GO" id="GO:0002098">
    <property type="term" value="P:tRNA wobble uridine modification"/>
    <property type="evidence" value="ECO:0007669"/>
    <property type="project" value="InterPro"/>
</dbReference>
<dbReference type="FunFam" id="1.10.10.1800:FF:000001">
    <property type="entry name" value="tRNA uridine 5-carboxymethylaminomethyl modification enzyme MnmG"/>
    <property type="match status" value="1"/>
</dbReference>
<dbReference type="FunFam" id="1.10.150.570:FF:000001">
    <property type="entry name" value="tRNA uridine 5-carboxymethylaminomethyl modification enzyme MnmG"/>
    <property type="match status" value="1"/>
</dbReference>
<dbReference type="FunFam" id="3.50.50.60:FF:000002">
    <property type="entry name" value="tRNA uridine 5-carboxymethylaminomethyl modification enzyme MnmG"/>
    <property type="match status" value="1"/>
</dbReference>
<dbReference type="FunFam" id="3.50.50.60:FF:000010">
    <property type="entry name" value="tRNA uridine 5-carboxymethylaminomethyl modification enzyme MnmG"/>
    <property type="match status" value="1"/>
</dbReference>
<dbReference type="Gene3D" id="3.50.50.60">
    <property type="entry name" value="FAD/NAD(P)-binding domain"/>
    <property type="match status" value="2"/>
</dbReference>
<dbReference type="Gene3D" id="1.10.150.570">
    <property type="entry name" value="GidA associated domain, C-terminal subdomain"/>
    <property type="match status" value="1"/>
</dbReference>
<dbReference type="Gene3D" id="1.10.10.1800">
    <property type="entry name" value="tRNA uridine 5-carboxymethylaminomethyl modification enzyme MnmG/GidA"/>
    <property type="match status" value="1"/>
</dbReference>
<dbReference type="HAMAP" id="MF_00129">
    <property type="entry name" value="MnmG_GidA"/>
    <property type="match status" value="1"/>
</dbReference>
<dbReference type="InterPro" id="IPR036188">
    <property type="entry name" value="FAD/NAD-bd_sf"/>
</dbReference>
<dbReference type="InterPro" id="IPR049312">
    <property type="entry name" value="GIDA_C_N"/>
</dbReference>
<dbReference type="InterPro" id="IPR004416">
    <property type="entry name" value="MnmG"/>
</dbReference>
<dbReference type="InterPro" id="IPR002218">
    <property type="entry name" value="MnmG-rel"/>
</dbReference>
<dbReference type="InterPro" id="IPR020595">
    <property type="entry name" value="MnmG-rel_CS"/>
</dbReference>
<dbReference type="InterPro" id="IPR026904">
    <property type="entry name" value="MnmG_C"/>
</dbReference>
<dbReference type="InterPro" id="IPR047001">
    <property type="entry name" value="MnmG_C_subdom"/>
</dbReference>
<dbReference type="InterPro" id="IPR044920">
    <property type="entry name" value="MnmG_C_subdom_sf"/>
</dbReference>
<dbReference type="InterPro" id="IPR040131">
    <property type="entry name" value="MnmG_N"/>
</dbReference>
<dbReference type="NCBIfam" id="TIGR00136">
    <property type="entry name" value="mnmG_gidA"/>
    <property type="match status" value="1"/>
</dbReference>
<dbReference type="PANTHER" id="PTHR11806">
    <property type="entry name" value="GLUCOSE INHIBITED DIVISION PROTEIN A"/>
    <property type="match status" value="1"/>
</dbReference>
<dbReference type="PANTHER" id="PTHR11806:SF0">
    <property type="entry name" value="PROTEIN MTO1 HOMOLOG, MITOCHONDRIAL"/>
    <property type="match status" value="1"/>
</dbReference>
<dbReference type="Pfam" id="PF01134">
    <property type="entry name" value="GIDA"/>
    <property type="match status" value="1"/>
</dbReference>
<dbReference type="Pfam" id="PF21680">
    <property type="entry name" value="GIDA_C_1st"/>
    <property type="match status" value="1"/>
</dbReference>
<dbReference type="Pfam" id="PF13932">
    <property type="entry name" value="SAM_GIDA_C"/>
    <property type="match status" value="1"/>
</dbReference>
<dbReference type="SMART" id="SM01228">
    <property type="entry name" value="GIDA_assoc_3"/>
    <property type="match status" value="1"/>
</dbReference>
<dbReference type="SUPFAM" id="SSF51905">
    <property type="entry name" value="FAD/NAD(P)-binding domain"/>
    <property type="match status" value="1"/>
</dbReference>
<dbReference type="PROSITE" id="PS01280">
    <property type="entry name" value="GIDA_1"/>
    <property type="match status" value="1"/>
</dbReference>
<name>MNMG_FRATH</name>
<comment type="function">
    <text evidence="1">NAD-binding protein involved in the addition of a carboxymethylaminomethyl (cmnm) group at the wobble position (U34) of certain tRNAs, forming tRNA-cmnm(5)s(2)U34.</text>
</comment>
<comment type="cofactor">
    <cofactor evidence="1">
        <name>FAD</name>
        <dbReference type="ChEBI" id="CHEBI:57692"/>
    </cofactor>
</comment>
<comment type="subunit">
    <text evidence="1">Homodimer. Heterotetramer of two MnmE and two MnmG subunits.</text>
</comment>
<comment type="subcellular location">
    <subcellularLocation>
        <location evidence="1">Cytoplasm</location>
    </subcellularLocation>
</comment>
<comment type="similarity">
    <text evidence="1">Belongs to the MnmG family.</text>
</comment>
<accession>Q2A464</accession>
<evidence type="ECO:0000255" key="1">
    <source>
        <dbReference type="HAMAP-Rule" id="MF_00129"/>
    </source>
</evidence>
<protein>
    <recommendedName>
        <fullName evidence="1">tRNA uridine 5-carboxymethylaminomethyl modification enzyme MnmG</fullName>
    </recommendedName>
    <alternativeName>
        <fullName evidence="1">Glucose-inhibited division protein A</fullName>
    </alternativeName>
</protein>
<sequence>MIYDYGYDVIVVGGGHAGVEAASASARIGAKTLLLTHNIDTIGQMSCNPAIGGIGKGHLVKEIDAMGGVMAKAIDMAGIQFRILNSRKGPAVRATRAQADRVLYKKAINSLINNQENLDIFQDSVDDLVVENNTVCGAITKTGITFRAKKVVLTVGTFLGGKIHIGKVSNAGGRAGDQPSNALAARLRSLPFRVDRLKTGTPPRIDRRSVDFSVMEVQHGDNPTPYFSFFSKGKIEHPRQIPCYITYTNNETHKIITDNLDKSAMYSGLIEGIGPRYCPSIEDKVVRFADKERHQIFVEPEGLNSIELYPNGLSTSLPFEVQCNYIRSIKGFEKAFIMRPGYAIEYDFFDPRDLKPTLETKHIKNLYFAGQINGTTGYEEAGAQGLVASINAAISIDSDKSWYPTRADSYIGVLIDDLITKGTKEPYRMFTSRAEYRLILREDNADLRLSDKACELGLLSKEDQQHFISKKNAIIENIAMMKNTWIGPQTQKARDLEKFLDKKMTRESTLFDLLKRPEIDYSKLQQISELNLNLQDDAVIEQIEISAKYSGYIERQNKDIEKTATLEQKAIPTDFNYSQVKGLSNEVLQKLTEQKPTTLGEASRIPGITPAAISLLTIYMKKTGFIK</sequence>
<proteinExistence type="inferred from homology"/>
<reference key="1">
    <citation type="submission" date="2006-03" db="EMBL/GenBank/DDBJ databases">
        <title>Complete genome sequence of Francisella tularensis LVS (Live Vaccine Strain).</title>
        <authorList>
            <person name="Chain P."/>
            <person name="Larimer F."/>
            <person name="Land M."/>
            <person name="Stilwagen S."/>
            <person name="Larsson P."/>
            <person name="Bearden S."/>
            <person name="Chu M."/>
            <person name="Oyston P."/>
            <person name="Forsman M."/>
            <person name="Andersson S."/>
            <person name="Lindler L."/>
            <person name="Titball R."/>
            <person name="Garcia E."/>
        </authorList>
    </citation>
    <scope>NUCLEOTIDE SEQUENCE [LARGE SCALE GENOMIC DNA]</scope>
    <source>
        <strain>LVS</strain>
    </source>
</reference>
<gene>
    <name evidence="1" type="primary">mnmG</name>
    <name evidence="1" type="synonym">gidA</name>
    <name type="ordered locus">FTL_0739</name>
</gene>
<feature type="chain" id="PRO_1000016599" description="tRNA uridine 5-carboxymethylaminomethyl modification enzyme MnmG">
    <location>
        <begin position="1"/>
        <end position="627"/>
    </location>
</feature>
<feature type="binding site" evidence="1">
    <location>
        <begin position="13"/>
        <end position="18"/>
    </location>
    <ligand>
        <name>FAD</name>
        <dbReference type="ChEBI" id="CHEBI:57692"/>
    </ligand>
</feature>
<feature type="binding site" evidence="1">
    <location>
        <position position="125"/>
    </location>
    <ligand>
        <name>FAD</name>
        <dbReference type="ChEBI" id="CHEBI:57692"/>
    </ligand>
</feature>
<feature type="binding site" evidence="1">
    <location>
        <position position="180"/>
    </location>
    <ligand>
        <name>FAD</name>
        <dbReference type="ChEBI" id="CHEBI:57692"/>
    </ligand>
</feature>
<feature type="binding site" evidence="1">
    <location>
        <begin position="274"/>
        <end position="288"/>
    </location>
    <ligand>
        <name>NAD(+)</name>
        <dbReference type="ChEBI" id="CHEBI:57540"/>
    </ligand>
</feature>
<feature type="binding site" evidence="1">
    <location>
        <position position="371"/>
    </location>
    <ligand>
        <name>FAD</name>
        <dbReference type="ChEBI" id="CHEBI:57692"/>
    </ligand>
</feature>
<keyword id="KW-0963">Cytoplasm</keyword>
<keyword id="KW-0274">FAD</keyword>
<keyword id="KW-0285">Flavoprotein</keyword>
<keyword id="KW-0520">NAD</keyword>
<keyword id="KW-1185">Reference proteome</keyword>
<keyword id="KW-0819">tRNA processing</keyword>
<organism>
    <name type="scientific">Francisella tularensis subsp. holarctica (strain LVS)</name>
    <dbReference type="NCBI Taxonomy" id="376619"/>
    <lineage>
        <taxon>Bacteria</taxon>
        <taxon>Pseudomonadati</taxon>
        <taxon>Pseudomonadota</taxon>
        <taxon>Gammaproteobacteria</taxon>
        <taxon>Thiotrichales</taxon>
        <taxon>Francisellaceae</taxon>
        <taxon>Francisella</taxon>
    </lineage>
</organism>